<reference key="1">
    <citation type="journal article" date="2009" name="PLoS ONE">
        <title>Genome degradation in Brucella ovis corresponds with narrowing of its host range and tissue tropism.</title>
        <authorList>
            <person name="Tsolis R.M."/>
            <person name="Seshadri R."/>
            <person name="Santos R.L."/>
            <person name="Sangari F.J."/>
            <person name="Lobo J.M."/>
            <person name="de Jong M.F."/>
            <person name="Ren Q."/>
            <person name="Myers G."/>
            <person name="Brinkac L.M."/>
            <person name="Nelson W.C."/>
            <person name="Deboy R.T."/>
            <person name="Angiuoli S."/>
            <person name="Khouri H."/>
            <person name="Dimitrov G."/>
            <person name="Robinson J.R."/>
            <person name="Mulligan S."/>
            <person name="Walker R.L."/>
            <person name="Elzer P.E."/>
            <person name="Hassan K.A."/>
            <person name="Paulsen I.T."/>
        </authorList>
    </citation>
    <scope>NUCLEOTIDE SEQUENCE [LARGE SCALE GENOMIC DNA]</scope>
    <source>
        <strain>ATCC 25840 / 63/290 / NCTC 10512</strain>
    </source>
</reference>
<gene>
    <name type="primary">vjbR</name>
    <name type="ordered locus">BOV_A0110</name>
</gene>
<organism>
    <name type="scientific">Brucella ovis (strain ATCC 25840 / 63/290 / NCTC 10512)</name>
    <dbReference type="NCBI Taxonomy" id="444178"/>
    <lineage>
        <taxon>Bacteria</taxon>
        <taxon>Pseudomonadati</taxon>
        <taxon>Pseudomonadota</taxon>
        <taxon>Alphaproteobacteria</taxon>
        <taxon>Hyphomicrobiales</taxon>
        <taxon>Brucellaceae</taxon>
        <taxon>Brucella/Ochrobactrum group</taxon>
        <taxon>Brucella</taxon>
    </lineage>
</organism>
<dbReference type="EMBL" id="CP000709">
    <property type="protein sequence ID" value="ABQ62475.1"/>
    <property type="status" value="ALT_INIT"/>
    <property type="molecule type" value="Genomic_DNA"/>
</dbReference>
<dbReference type="RefSeq" id="WP_006015076.1">
    <property type="nucleotide sequence ID" value="NC_009504.1"/>
</dbReference>
<dbReference type="SMR" id="A5VTN1"/>
<dbReference type="GeneID" id="45125534"/>
<dbReference type="KEGG" id="bov:BOV_A0110"/>
<dbReference type="HOGENOM" id="CLU_072786_7_0_5"/>
<dbReference type="PhylomeDB" id="A5VTN1"/>
<dbReference type="Proteomes" id="UP000006383">
    <property type="component" value="Chromosome II"/>
</dbReference>
<dbReference type="GO" id="GO:0003677">
    <property type="term" value="F:DNA binding"/>
    <property type="evidence" value="ECO:0007669"/>
    <property type="project" value="UniProtKB-KW"/>
</dbReference>
<dbReference type="GO" id="GO:0009372">
    <property type="term" value="P:quorum sensing"/>
    <property type="evidence" value="ECO:0007669"/>
    <property type="project" value="UniProtKB-KW"/>
</dbReference>
<dbReference type="GO" id="GO:0006355">
    <property type="term" value="P:regulation of DNA-templated transcription"/>
    <property type="evidence" value="ECO:0007669"/>
    <property type="project" value="InterPro"/>
</dbReference>
<dbReference type="CDD" id="cd06170">
    <property type="entry name" value="LuxR_C_like"/>
    <property type="match status" value="1"/>
</dbReference>
<dbReference type="Gene3D" id="3.30.450.80">
    <property type="entry name" value="Transcription factor LuxR-like, autoinducer-binding domain"/>
    <property type="match status" value="1"/>
</dbReference>
<dbReference type="Gene3D" id="1.10.10.10">
    <property type="entry name" value="Winged helix-like DNA-binding domain superfamily/Winged helix DNA-binding domain"/>
    <property type="match status" value="1"/>
</dbReference>
<dbReference type="InterPro" id="IPR016032">
    <property type="entry name" value="Sig_transdc_resp-reg_C-effctor"/>
</dbReference>
<dbReference type="InterPro" id="IPR005143">
    <property type="entry name" value="TF_LuxR_autoind-bd_dom"/>
</dbReference>
<dbReference type="InterPro" id="IPR036693">
    <property type="entry name" value="TF_LuxR_autoind-bd_dom_sf"/>
</dbReference>
<dbReference type="InterPro" id="IPR000792">
    <property type="entry name" value="Tscrpt_reg_LuxR_C"/>
</dbReference>
<dbReference type="InterPro" id="IPR036388">
    <property type="entry name" value="WH-like_DNA-bd_sf"/>
</dbReference>
<dbReference type="PANTHER" id="PTHR44688">
    <property type="entry name" value="DNA-BINDING TRANSCRIPTIONAL ACTIVATOR DEVR_DOSR"/>
    <property type="match status" value="1"/>
</dbReference>
<dbReference type="PANTHER" id="PTHR44688:SF16">
    <property type="entry name" value="DNA-BINDING TRANSCRIPTIONAL ACTIVATOR DEVR_DOSR"/>
    <property type="match status" value="1"/>
</dbReference>
<dbReference type="Pfam" id="PF03472">
    <property type="entry name" value="Autoind_bind"/>
    <property type="match status" value="1"/>
</dbReference>
<dbReference type="Pfam" id="PF00196">
    <property type="entry name" value="GerE"/>
    <property type="match status" value="1"/>
</dbReference>
<dbReference type="PRINTS" id="PR00038">
    <property type="entry name" value="HTHLUXR"/>
</dbReference>
<dbReference type="SMART" id="SM00421">
    <property type="entry name" value="HTH_LUXR"/>
    <property type="match status" value="1"/>
</dbReference>
<dbReference type="SUPFAM" id="SSF46894">
    <property type="entry name" value="C-terminal effector domain of the bipartite response regulators"/>
    <property type="match status" value="1"/>
</dbReference>
<dbReference type="SUPFAM" id="SSF75516">
    <property type="entry name" value="Pheromone-binding domain of LuxR-like quorum-sensing transcription factors"/>
    <property type="match status" value="1"/>
</dbReference>
<dbReference type="PROSITE" id="PS50043">
    <property type="entry name" value="HTH_LUXR_2"/>
    <property type="match status" value="1"/>
</dbReference>
<protein>
    <recommendedName>
        <fullName>HTH-type quorum sensing-dependent transcriptional regulator VjbR</fullName>
    </recommendedName>
</protein>
<comment type="function">
    <text evidence="1">Transcriptional regulator involved in the global control of Brucella gene expression. Mediates the effects of the quorum sensing autoinducer C12-HSL (N-dodecanoyl-homoserine lactone) on a large and diverse number of genes.</text>
</comment>
<comment type="sequence caution" evidence="4">
    <conflict type="erroneous initiation">
        <sequence resource="EMBL-CDS" id="ABQ62475"/>
    </conflict>
</comment>
<sequence>MSLDLVHFPNYKKTFFGSSFQSDTLALLTRIRDEIGCRYVTHTYRGRVGDCTKVNSADLTVLITLPATWVARYSSKNYFAIDPVFQEDAPYYRNDTSAIARDLKEDADICPAVAELLHDAEKHGLGNLFIAVSARNPKGVAGCTVFTFEVEDEDRTQFLARMRPRLLSLAGIIHGTVCGCKDANSVASLLTPREVDCLRWAANGKTDGEIAEILSIARWTVVTYLQNAKIKLNCSNRTSAVATALSLGIIDMPEVQHLV</sequence>
<feature type="chain" id="PRO_0000319928" description="HTH-type quorum sensing-dependent transcriptional regulator VjbR">
    <location>
        <begin position="1"/>
        <end position="259"/>
    </location>
</feature>
<feature type="domain" description="HTH luxR-type" evidence="3">
    <location>
        <begin position="183"/>
        <end position="248"/>
    </location>
</feature>
<feature type="DNA-binding region" description="H-T-H motif" evidence="3">
    <location>
        <begin position="207"/>
        <end position="226"/>
    </location>
</feature>
<feature type="region of interest" description="C12-HSL binding" evidence="2">
    <location>
        <begin position="76"/>
        <end position="179"/>
    </location>
</feature>
<keyword id="KW-0238">DNA-binding</keyword>
<keyword id="KW-0673">Quorum sensing</keyword>
<keyword id="KW-0804">Transcription</keyword>
<keyword id="KW-0805">Transcription regulation</keyword>
<evidence type="ECO:0000250" key="1">
    <source>
        <dbReference type="UniProtKB" id="Q8YAY5"/>
    </source>
</evidence>
<evidence type="ECO:0000255" key="2"/>
<evidence type="ECO:0000255" key="3">
    <source>
        <dbReference type="PROSITE-ProRule" id="PRU00411"/>
    </source>
</evidence>
<evidence type="ECO:0000305" key="4"/>
<accession>A5VTN1</accession>
<proteinExistence type="inferred from homology"/>
<name>VJBR_BRUO2</name>